<comment type="function">
    <text evidence="2">Component of the ubiquinol-cytochrome c reductase complex (complex III or cytochrome b-c1 complex) that is part of the mitochondrial respiratory chain. The b-c1 complex mediates electron transfer from ubiquinol to cytochrome c. Contributes to the generation of a proton gradient across the mitochondrial membrane that is then used for ATP synthesis.</text>
</comment>
<comment type="cofactor">
    <cofactor evidence="2">
        <name>heme b</name>
        <dbReference type="ChEBI" id="CHEBI:60344"/>
    </cofactor>
    <text evidence="2">Binds 2 heme b groups non-covalently.</text>
</comment>
<comment type="subunit">
    <text evidence="2">The cytochrome bc1 complex contains 11 subunits: 3 respiratory subunits (MT-CYB, CYC1 and UQCRFS1), 2 core proteins (UQCRC1 and UQCRC2) and 6 low-molecular weight proteins (UQCRH/QCR6, UQCRB/QCR7, UQCRQ/QCR8, UQCR10/QCR9, UQCR11/QCR10 and a cleavage product of UQCRFS1). This cytochrome bc1 complex then forms a dimer.</text>
</comment>
<comment type="subcellular location">
    <subcellularLocation>
        <location evidence="2">Mitochondrion inner membrane</location>
        <topology evidence="2">Multi-pass membrane protein</topology>
    </subcellularLocation>
</comment>
<comment type="miscellaneous">
    <text evidence="1">Heme 1 (or BL or b562) is low-potential and absorbs at about 562 nm, and heme 2 (or BH or b566) is high-potential and absorbs at about 566 nm.</text>
</comment>
<comment type="similarity">
    <text evidence="3 4">Belongs to the cytochrome b family.</text>
</comment>
<comment type="caution">
    <text evidence="2">The full-length protein contains only eight transmembrane helices, not nine as predicted by bioinformatics tools.</text>
</comment>
<geneLocation type="mitochondrion"/>
<feature type="chain" id="PRO_0000254848" description="Cytochrome b">
    <location>
        <begin position="1"/>
        <end position="379"/>
    </location>
</feature>
<feature type="transmembrane region" description="Helical" evidence="2">
    <location>
        <begin position="33"/>
        <end position="53"/>
    </location>
</feature>
<feature type="transmembrane region" description="Helical" evidence="2">
    <location>
        <begin position="77"/>
        <end position="98"/>
    </location>
</feature>
<feature type="transmembrane region" description="Helical" evidence="2">
    <location>
        <begin position="113"/>
        <end position="133"/>
    </location>
</feature>
<feature type="transmembrane region" description="Helical" evidence="2">
    <location>
        <begin position="178"/>
        <end position="198"/>
    </location>
</feature>
<feature type="transmembrane region" description="Helical" evidence="2">
    <location>
        <begin position="226"/>
        <end position="246"/>
    </location>
</feature>
<feature type="transmembrane region" description="Helical" evidence="2">
    <location>
        <begin position="288"/>
        <end position="308"/>
    </location>
</feature>
<feature type="transmembrane region" description="Helical" evidence="2">
    <location>
        <begin position="320"/>
        <end position="340"/>
    </location>
</feature>
<feature type="transmembrane region" description="Helical" evidence="2">
    <location>
        <begin position="347"/>
        <end position="367"/>
    </location>
</feature>
<feature type="binding site" description="axial binding residue" evidence="2">
    <location>
        <position position="83"/>
    </location>
    <ligand>
        <name>heme b</name>
        <dbReference type="ChEBI" id="CHEBI:60344"/>
        <label>b562</label>
    </ligand>
    <ligandPart>
        <name>Fe</name>
        <dbReference type="ChEBI" id="CHEBI:18248"/>
    </ligandPart>
</feature>
<feature type="binding site" description="axial binding residue" evidence="2">
    <location>
        <position position="97"/>
    </location>
    <ligand>
        <name>heme b</name>
        <dbReference type="ChEBI" id="CHEBI:60344"/>
        <label>b566</label>
    </ligand>
    <ligandPart>
        <name>Fe</name>
        <dbReference type="ChEBI" id="CHEBI:18248"/>
    </ligandPart>
</feature>
<feature type="binding site" description="axial binding residue" evidence="2">
    <location>
        <position position="182"/>
    </location>
    <ligand>
        <name>heme b</name>
        <dbReference type="ChEBI" id="CHEBI:60344"/>
        <label>b562</label>
    </ligand>
    <ligandPart>
        <name>Fe</name>
        <dbReference type="ChEBI" id="CHEBI:18248"/>
    </ligandPart>
</feature>
<feature type="binding site" description="axial binding residue" evidence="2">
    <location>
        <position position="196"/>
    </location>
    <ligand>
        <name>heme b</name>
        <dbReference type="ChEBI" id="CHEBI:60344"/>
        <label>b566</label>
    </ligand>
    <ligandPart>
        <name>Fe</name>
        <dbReference type="ChEBI" id="CHEBI:18248"/>
    </ligandPart>
</feature>
<feature type="binding site" evidence="2">
    <location>
        <position position="201"/>
    </location>
    <ligand>
        <name>a ubiquinone</name>
        <dbReference type="ChEBI" id="CHEBI:16389"/>
    </ligand>
</feature>
<gene>
    <name type="primary">MT-CYB</name>
    <name type="synonym">COB</name>
    <name type="synonym">CYTB</name>
    <name type="synonym">MTCYB</name>
</gene>
<accession>Q7Y8J5</accession>
<reference key="1">
    <citation type="journal article" date="2003" name="Mol. Phylogenet. Evol.">
        <title>Afrotherian phylogeny as inferred from complete mitochondrial genomes.</title>
        <authorList>
            <person name="Murata Y."/>
            <person name="Nikaido M."/>
            <person name="Sasaki T."/>
            <person name="Cao Y."/>
            <person name="Fukumoto Y."/>
            <person name="Hasegawa M."/>
            <person name="Okada N."/>
        </authorList>
    </citation>
    <scope>NUCLEOTIDE SEQUENCE [GENOMIC DNA]</scope>
</reference>
<sequence>MTNIRKNHPLLKTINDAFIDLPTPSNISTWWNFGSLLGACLIIQVLTGLFLAMHYTSDTMTAFTSVTHICRDVNHGWMIRYLHANGASLFFVCLYAHIGRGIYYGSYLYSETWNIGVLLLLTTMATAFLGYVLPWGQMSFWGATVITNLLSALPYIGTDLVEWIWGGFSVDKATLTRFFAFHFIMPFIIMALAMVHLLFLHETGSNNPLGLISNADKIPFHPYYTMKDLAGLVLLILTLLTLTLLFPDMLGDPDNYTPANPLNTPPHIKPEWYFLFAYAILRSIPNKLGGVIALIMSILILALLPLLHTSKQRSLMFRPLSQCLFWLLVADLITLTWIGGQPVEHPYIIIGQMASTLYFTIFLVLMPIAGLIENHMLKL</sequence>
<protein>
    <recommendedName>
        <fullName>Cytochrome b</fullName>
    </recommendedName>
    <alternativeName>
        <fullName>Complex III subunit 3</fullName>
    </alternativeName>
    <alternativeName>
        <fullName>Complex III subunit III</fullName>
    </alternativeName>
    <alternativeName>
        <fullName>Cytochrome b-c1 complex subunit 3</fullName>
    </alternativeName>
    <alternativeName>
        <fullName>Ubiquinol-cytochrome-c reductase complex cytochrome b subunit</fullName>
    </alternativeName>
</protein>
<dbReference type="EMBL" id="AB096865">
    <property type="protein sequence ID" value="BAC78411.1"/>
    <property type="molecule type" value="Genomic_DNA"/>
</dbReference>
<dbReference type="RefSeq" id="NP_861488.1">
    <property type="nucleotide sequence ID" value="NC_004919.1"/>
</dbReference>
<dbReference type="SMR" id="Q7Y8J5"/>
<dbReference type="Ensembl" id="ENSPCAT00000020704">
    <property type="protein sequence ID" value="ENSPCAP00000016144"/>
    <property type="gene ID" value="ENSPCAG00000020710"/>
</dbReference>
<dbReference type="GeneID" id="1485716"/>
<dbReference type="CTD" id="4519"/>
<dbReference type="HOGENOM" id="CLU_031114_3_0_1"/>
<dbReference type="GO" id="GO:0005743">
    <property type="term" value="C:mitochondrial inner membrane"/>
    <property type="evidence" value="ECO:0007669"/>
    <property type="project" value="UniProtKB-SubCell"/>
</dbReference>
<dbReference type="GO" id="GO:0045275">
    <property type="term" value="C:respiratory chain complex III"/>
    <property type="evidence" value="ECO:0007669"/>
    <property type="project" value="InterPro"/>
</dbReference>
<dbReference type="GO" id="GO:0046872">
    <property type="term" value="F:metal ion binding"/>
    <property type="evidence" value="ECO:0007669"/>
    <property type="project" value="UniProtKB-KW"/>
</dbReference>
<dbReference type="GO" id="GO:0008121">
    <property type="term" value="F:ubiquinol-cytochrome-c reductase activity"/>
    <property type="evidence" value="ECO:0007669"/>
    <property type="project" value="InterPro"/>
</dbReference>
<dbReference type="GO" id="GO:0006122">
    <property type="term" value="P:mitochondrial electron transport, ubiquinol to cytochrome c"/>
    <property type="evidence" value="ECO:0007669"/>
    <property type="project" value="TreeGrafter"/>
</dbReference>
<dbReference type="CDD" id="cd00290">
    <property type="entry name" value="cytochrome_b_C"/>
    <property type="match status" value="1"/>
</dbReference>
<dbReference type="CDD" id="cd00284">
    <property type="entry name" value="Cytochrome_b_N"/>
    <property type="match status" value="1"/>
</dbReference>
<dbReference type="FunFam" id="1.20.810.10:FF:000002">
    <property type="entry name" value="Cytochrome b"/>
    <property type="match status" value="1"/>
</dbReference>
<dbReference type="Gene3D" id="1.20.810.10">
    <property type="entry name" value="Cytochrome Bc1 Complex, Chain C"/>
    <property type="match status" value="1"/>
</dbReference>
<dbReference type="InterPro" id="IPR005798">
    <property type="entry name" value="Cyt_b/b6_C"/>
</dbReference>
<dbReference type="InterPro" id="IPR036150">
    <property type="entry name" value="Cyt_b/b6_C_sf"/>
</dbReference>
<dbReference type="InterPro" id="IPR005797">
    <property type="entry name" value="Cyt_b/b6_N"/>
</dbReference>
<dbReference type="InterPro" id="IPR027387">
    <property type="entry name" value="Cytb/b6-like_sf"/>
</dbReference>
<dbReference type="InterPro" id="IPR030689">
    <property type="entry name" value="Cytochrome_b"/>
</dbReference>
<dbReference type="InterPro" id="IPR048260">
    <property type="entry name" value="Cytochrome_b_C_euk/bac"/>
</dbReference>
<dbReference type="InterPro" id="IPR048259">
    <property type="entry name" value="Cytochrome_b_N_euk/bac"/>
</dbReference>
<dbReference type="InterPro" id="IPR016174">
    <property type="entry name" value="Di-haem_cyt_TM"/>
</dbReference>
<dbReference type="PANTHER" id="PTHR19271">
    <property type="entry name" value="CYTOCHROME B"/>
    <property type="match status" value="1"/>
</dbReference>
<dbReference type="PANTHER" id="PTHR19271:SF16">
    <property type="entry name" value="CYTOCHROME B"/>
    <property type="match status" value="1"/>
</dbReference>
<dbReference type="Pfam" id="PF00032">
    <property type="entry name" value="Cytochrom_B_C"/>
    <property type="match status" value="1"/>
</dbReference>
<dbReference type="Pfam" id="PF00033">
    <property type="entry name" value="Cytochrome_B"/>
    <property type="match status" value="1"/>
</dbReference>
<dbReference type="PIRSF" id="PIRSF038885">
    <property type="entry name" value="COB"/>
    <property type="match status" value="1"/>
</dbReference>
<dbReference type="SUPFAM" id="SSF81648">
    <property type="entry name" value="a domain/subunit of cytochrome bc1 complex (Ubiquinol-cytochrome c reductase)"/>
    <property type="match status" value="1"/>
</dbReference>
<dbReference type="SUPFAM" id="SSF81342">
    <property type="entry name" value="Transmembrane di-heme cytochromes"/>
    <property type="match status" value="1"/>
</dbReference>
<dbReference type="PROSITE" id="PS51003">
    <property type="entry name" value="CYTB_CTER"/>
    <property type="match status" value="1"/>
</dbReference>
<dbReference type="PROSITE" id="PS51002">
    <property type="entry name" value="CYTB_NTER"/>
    <property type="match status" value="1"/>
</dbReference>
<name>CYB_PROCA</name>
<keyword id="KW-0249">Electron transport</keyword>
<keyword id="KW-0349">Heme</keyword>
<keyword id="KW-0408">Iron</keyword>
<keyword id="KW-0472">Membrane</keyword>
<keyword id="KW-0479">Metal-binding</keyword>
<keyword id="KW-0496">Mitochondrion</keyword>
<keyword id="KW-0999">Mitochondrion inner membrane</keyword>
<keyword id="KW-0679">Respiratory chain</keyword>
<keyword id="KW-0812">Transmembrane</keyword>
<keyword id="KW-1133">Transmembrane helix</keyword>
<keyword id="KW-0813">Transport</keyword>
<keyword id="KW-0830">Ubiquinone</keyword>
<organism>
    <name type="scientific">Procavia capensis</name>
    <name type="common">Rock hyrax</name>
    <dbReference type="NCBI Taxonomy" id="9813"/>
    <lineage>
        <taxon>Eukaryota</taxon>
        <taxon>Metazoa</taxon>
        <taxon>Chordata</taxon>
        <taxon>Craniata</taxon>
        <taxon>Vertebrata</taxon>
        <taxon>Euteleostomi</taxon>
        <taxon>Mammalia</taxon>
        <taxon>Eutheria</taxon>
        <taxon>Afrotheria</taxon>
        <taxon>Hyracoidea</taxon>
        <taxon>Procaviidae</taxon>
        <taxon>Procavia</taxon>
    </lineage>
</organism>
<evidence type="ECO:0000250" key="1"/>
<evidence type="ECO:0000250" key="2">
    <source>
        <dbReference type="UniProtKB" id="P00157"/>
    </source>
</evidence>
<evidence type="ECO:0000255" key="3">
    <source>
        <dbReference type="PROSITE-ProRule" id="PRU00967"/>
    </source>
</evidence>
<evidence type="ECO:0000255" key="4">
    <source>
        <dbReference type="PROSITE-ProRule" id="PRU00968"/>
    </source>
</evidence>
<proteinExistence type="inferred from homology"/>